<sequence length="738" mass="81929">MQKKVVQSASKNEELDPHYKRSSVPFPYGLPDYDAEYQFINHHMQQLLTRPVEGTHSASVHPSTSSTSHISSPSAFSVQNPNPNDAPFVGNIGLDASGFSSGGMSEYYPRSVSMQQSQDVHFQNTEIPYYHRSPSSDSFSPGVVASVNPNSNNSPTFYSNPPALSNIPIPLNNSPYRPEDAYFQLQGAGVKADINPYNLSPYSQYGPEGTAYSNAQAHHQDGAPLQRVCSAPDPPKTSMPPFGSAGSPSPNRSLNVSNNTTPPLSTVNKIIKKPKATTGKVKKRLPQAKRACAKCQKDNKKCDDARPCQRCIKAKTDCIDLPRKKRPTGVRRGPYKKLSDTSNNTKSTTASSGHSTQDSLSSKMLDPSSDNQFAMSSRQMDENGMAQYPSSAIKQELNLQPQILVSSASKNFQPNVTPPFAVHHDHFNSTSMDGVAVSNMDETGTSSAGSKPFNRKSRNRSFTNPVGMTEEHFLREYAQHSVANPSLLIHQIHGLPSEQVHGLLSHTELGNAMHNQPTYNESSIAAENVNNWMLETNDHENLSMQSHFEVPDLKMNHHDSSFFDRHIDQTAMPGQNQHGTVKNMETMHHFYPDVHNSEFPAAPNPVKSQVPYYYQSQAADDEEEDVPDHQPSWRGRIHSFSIATDSSQHVVERPCIHSLRGIHGQQDGGLEQHDGDHVNMLPDTHAEELAYTSMLLFHDIPTRDIRPDFNVHELVDHGTYPNFHQNQADSFKNHPFRQ</sequence>
<gene>
    <name type="ORF">pi067</name>
    <name type="ORF">SPBC27B12.11c</name>
</gene>
<dbReference type="EMBL" id="AB004539">
    <property type="protein sequence ID" value="BAA21449.1"/>
    <property type="molecule type" value="Genomic_DNA"/>
</dbReference>
<dbReference type="EMBL" id="CU329671">
    <property type="protein sequence ID" value="CAA16906.1"/>
    <property type="molecule type" value="Genomic_DNA"/>
</dbReference>
<dbReference type="PIR" id="T40035">
    <property type="entry name" value="T40035"/>
</dbReference>
<dbReference type="PDB" id="6E33">
    <property type="method" value="X-ray"/>
    <property type="resolution" value="1.71 A"/>
    <property type="chains" value="A=279-339"/>
</dbReference>
<dbReference type="PDB" id="6O19">
    <property type="method" value="X-ray"/>
    <property type="resolution" value="1.60 A"/>
    <property type="chains" value="A=279-336"/>
</dbReference>
<dbReference type="PDBsum" id="6E33"/>
<dbReference type="PDBsum" id="6O19"/>
<dbReference type="SMR" id="O13658"/>
<dbReference type="BioGRID" id="277029">
    <property type="interactions" value="14"/>
</dbReference>
<dbReference type="STRING" id="284812.O13658"/>
<dbReference type="iPTMnet" id="O13658"/>
<dbReference type="PaxDb" id="4896-SPBC27B12.11c.1"/>
<dbReference type="EnsemblFungi" id="SPBC27B12.11c.1">
    <property type="protein sequence ID" value="SPBC27B12.11c.1:pep"/>
    <property type="gene ID" value="SPBC27B12.11c"/>
</dbReference>
<dbReference type="KEGG" id="spo:2540501"/>
<dbReference type="PomBase" id="SPBC27B12.11c"/>
<dbReference type="VEuPathDB" id="FungiDB:SPBC27B12.11c"/>
<dbReference type="eggNOG" id="ENOG502S5JI">
    <property type="taxonomic scope" value="Eukaryota"/>
</dbReference>
<dbReference type="HOGENOM" id="CLU_376051_0_0_1"/>
<dbReference type="InParanoid" id="O13658"/>
<dbReference type="OMA" id="SMLLFHD"/>
<dbReference type="PRO" id="PR:O13658"/>
<dbReference type="Proteomes" id="UP000002485">
    <property type="component" value="Chromosome II"/>
</dbReference>
<dbReference type="GO" id="GO:0000785">
    <property type="term" value="C:chromatin"/>
    <property type="evidence" value="ECO:0000314"/>
    <property type="project" value="PomBase"/>
</dbReference>
<dbReference type="GO" id="GO:0005829">
    <property type="term" value="C:cytosol"/>
    <property type="evidence" value="ECO:0007005"/>
    <property type="project" value="PomBase"/>
</dbReference>
<dbReference type="GO" id="GO:0005634">
    <property type="term" value="C:nucleus"/>
    <property type="evidence" value="ECO:0000318"/>
    <property type="project" value="GO_Central"/>
</dbReference>
<dbReference type="GO" id="GO:0001228">
    <property type="term" value="F:DNA-binding transcription activator activity, RNA polymerase II-specific"/>
    <property type="evidence" value="ECO:0000314"/>
    <property type="project" value="PomBase"/>
</dbReference>
<dbReference type="GO" id="GO:0003700">
    <property type="term" value="F:DNA-binding transcription factor activity"/>
    <property type="evidence" value="ECO:0000318"/>
    <property type="project" value="GO_Central"/>
</dbReference>
<dbReference type="GO" id="GO:0000978">
    <property type="term" value="F:RNA polymerase II cis-regulatory region sequence-specific DNA binding"/>
    <property type="evidence" value="ECO:0000314"/>
    <property type="project" value="PomBase"/>
</dbReference>
<dbReference type="GO" id="GO:0001162">
    <property type="term" value="F:RNA polymerase II intronic transcription regulatory region sequence-specific DNA binding"/>
    <property type="evidence" value="ECO:0000353"/>
    <property type="project" value="PomBase"/>
</dbReference>
<dbReference type="GO" id="GO:0000977">
    <property type="term" value="F:RNA polymerase II transcription regulatory region sequence-specific DNA binding"/>
    <property type="evidence" value="ECO:0000318"/>
    <property type="project" value="GO_Central"/>
</dbReference>
<dbReference type="GO" id="GO:0008270">
    <property type="term" value="F:zinc ion binding"/>
    <property type="evidence" value="ECO:0000255"/>
    <property type="project" value="PomBase"/>
</dbReference>
<dbReference type="GO" id="GO:0016036">
    <property type="term" value="P:cellular response to phosphate starvation"/>
    <property type="evidence" value="ECO:0000315"/>
    <property type="project" value="PomBase"/>
</dbReference>
<dbReference type="GO" id="GO:0009267">
    <property type="term" value="P:cellular response to starvation"/>
    <property type="evidence" value="ECO:0000318"/>
    <property type="project" value="GO_Central"/>
</dbReference>
<dbReference type="GO" id="GO:0030643">
    <property type="term" value="P:intracellular phosphate ion homeostasis"/>
    <property type="evidence" value="ECO:0000315"/>
    <property type="project" value="PomBase"/>
</dbReference>
<dbReference type="GO" id="GO:0045944">
    <property type="term" value="P:positive regulation of transcription by RNA polymerase II"/>
    <property type="evidence" value="ECO:0000315"/>
    <property type="project" value="PomBase"/>
</dbReference>
<dbReference type="CDD" id="cd00067">
    <property type="entry name" value="GAL4"/>
    <property type="match status" value="1"/>
</dbReference>
<dbReference type="Gene3D" id="4.10.240.10">
    <property type="entry name" value="Zn(2)-C6 fungal-type DNA-binding domain"/>
    <property type="match status" value="1"/>
</dbReference>
<dbReference type="InterPro" id="IPR050335">
    <property type="entry name" value="ERT1_acuK_gluconeogen_tf"/>
</dbReference>
<dbReference type="InterPro" id="IPR036864">
    <property type="entry name" value="Zn2-C6_fun-type_DNA-bd_sf"/>
</dbReference>
<dbReference type="InterPro" id="IPR001138">
    <property type="entry name" value="Zn2Cys6_DnaBD"/>
</dbReference>
<dbReference type="PANTHER" id="PTHR47659:SF1">
    <property type="entry name" value="TRANSCRIPTION ACTIVATOR OF GLUCONEOGENESIS ERT1"/>
    <property type="match status" value="1"/>
</dbReference>
<dbReference type="PANTHER" id="PTHR47659">
    <property type="entry name" value="ZN(II)2CYS6 TRANSCRIPTION FACTOR (EUROFUNG)-RELATED"/>
    <property type="match status" value="1"/>
</dbReference>
<dbReference type="SMART" id="SM00066">
    <property type="entry name" value="GAL4"/>
    <property type="match status" value="1"/>
</dbReference>
<dbReference type="SUPFAM" id="SSF57701">
    <property type="entry name" value="Zn2/Cys6 DNA-binding domain"/>
    <property type="match status" value="1"/>
</dbReference>
<dbReference type="PROSITE" id="PS50048">
    <property type="entry name" value="ZN2_CY6_FUNGAL_2"/>
    <property type="match status" value="1"/>
</dbReference>
<comment type="subcellular location">
    <subcellularLocation>
        <location evidence="3">Cytoplasm</location>
    </subcellularLocation>
    <subcellularLocation>
        <location evidence="1">Nucleus</location>
    </subcellularLocation>
</comment>
<reference key="1">
    <citation type="journal article" date="2000" name="Yeast">
        <title>A 38 kb segment containing the cdc2 gene from the left arm of fission yeast chromosome II: sequence analysis and characterization of the genomic DNA and cDNAs encoded on the segment.</title>
        <authorList>
            <person name="Machida M."/>
            <person name="Yamazaki S."/>
            <person name="Kunihiro S."/>
            <person name="Tanaka T."/>
            <person name="Kushida N."/>
            <person name="Jinno K."/>
            <person name="Haikawa Y."/>
            <person name="Yamazaki J."/>
            <person name="Yamamoto S."/>
            <person name="Sekine M."/>
            <person name="Oguchi A."/>
            <person name="Nagai Y."/>
            <person name="Sakai M."/>
            <person name="Aoki K."/>
            <person name="Ogura K."/>
            <person name="Kudoh Y."/>
            <person name="Kikuchi H."/>
            <person name="Zhang M.Q."/>
            <person name="Yanagida M."/>
        </authorList>
    </citation>
    <scope>NUCLEOTIDE SEQUENCE [LARGE SCALE GENOMIC DNA]</scope>
    <source>
        <strain>972 / ATCC 24843</strain>
    </source>
</reference>
<reference key="2">
    <citation type="journal article" date="2002" name="Nature">
        <title>The genome sequence of Schizosaccharomyces pombe.</title>
        <authorList>
            <person name="Wood V."/>
            <person name="Gwilliam R."/>
            <person name="Rajandream M.A."/>
            <person name="Lyne M.H."/>
            <person name="Lyne R."/>
            <person name="Stewart A."/>
            <person name="Sgouros J.G."/>
            <person name="Peat N."/>
            <person name="Hayles J."/>
            <person name="Baker S.G."/>
            <person name="Basham D."/>
            <person name="Bowman S."/>
            <person name="Brooks K."/>
            <person name="Brown D."/>
            <person name="Brown S."/>
            <person name="Chillingworth T."/>
            <person name="Churcher C.M."/>
            <person name="Collins M."/>
            <person name="Connor R."/>
            <person name="Cronin A."/>
            <person name="Davis P."/>
            <person name="Feltwell T."/>
            <person name="Fraser A."/>
            <person name="Gentles S."/>
            <person name="Goble A."/>
            <person name="Hamlin N."/>
            <person name="Harris D.E."/>
            <person name="Hidalgo J."/>
            <person name="Hodgson G."/>
            <person name="Holroyd S."/>
            <person name="Hornsby T."/>
            <person name="Howarth S."/>
            <person name="Huckle E.J."/>
            <person name="Hunt S."/>
            <person name="Jagels K."/>
            <person name="James K.D."/>
            <person name="Jones L."/>
            <person name="Jones M."/>
            <person name="Leather S."/>
            <person name="McDonald S."/>
            <person name="McLean J."/>
            <person name="Mooney P."/>
            <person name="Moule S."/>
            <person name="Mungall K.L."/>
            <person name="Murphy L.D."/>
            <person name="Niblett D."/>
            <person name="Odell C."/>
            <person name="Oliver K."/>
            <person name="O'Neil S."/>
            <person name="Pearson D."/>
            <person name="Quail M.A."/>
            <person name="Rabbinowitsch E."/>
            <person name="Rutherford K.M."/>
            <person name="Rutter S."/>
            <person name="Saunders D."/>
            <person name="Seeger K."/>
            <person name="Sharp S."/>
            <person name="Skelton J."/>
            <person name="Simmonds M.N."/>
            <person name="Squares R."/>
            <person name="Squares S."/>
            <person name="Stevens K."/>
            <person name="Taylor K."/>
            <person name="Taylor R.G."/>
            <person name="Tivey A."/>
            <person name="Walsh S.V."/>
            <person name="Warren T."/>
            <person name="Whitehead S."/>
            <person name="Woodward J.R."/>
            <person name="Volckaert G."/>
            <person name="Aert R."/>
            <person name="Robben J."/>
            <person name="Grymonprez B."/>
            <person name="Weltjens I."/>
            <person name="Vanstreels E."/>
            <person name="Rieger M."/>
            <person name="Schaefer M."/>
            <person name="Mueller-Auer S."/>
            <person name="Gabel C."/>
            <person name="Fuchs M."/>
            <person name="Duesterhoeft A."/>
            <person name="Fritzc C."/>
            <person name="Holzer E."/>
            <person name="Moestl D."/>
            <person name="Hilbert H."/>
            <person name="Borzym K."/>
            <person name="Langer I."/>
            <person name="Beck A."/>
            <person name="Lehrach H."/>
            <person name="Reinhardt R."/>
            <person name="Pohl T.M."/>
            <person name="Eger P."/>
            <person name="Zimmermann W."/>
            <person name="Wedler H."/>
            <person name="Wambutt R."/>
            <person name="Purnelle B."/>
            <person name="Goffeau A."/>
            <person name="Cadieu E."/>
            <person name="Dreano S."/>
            <person name="Gloux S."/>
            <person name="Lelaure V."/>
            <person name="Mottier S."/>
            <person name="Galibert F."/>
            <person name="Aves S.J."/>
            <person name="Xiang Z."/>
            <person name="Hunt C."/>
            <person name="Moore K."/>
            <person name="Hurst S.M."/>
            <person name="Lucas M."/>
            <person name="Rochet M."/>
            <person name="Gaillardin C."/>
            <person name="Tallada V.A."/>
            <person name="Garzon A."/>
            <person name="Thode G."/>
            <person name="Daga R.R."/>
            <person name="Cruzado L."/>
            <person name="Jimenez J."/>
            <person name="Sanchez M."/>
            <person name="del Rey F."/>
            <person name="Benito J."/>
            <person name="Dominguez A."/>
            <person name="Revuelta J.L."/>
            <person name="Moreno S."/>
            <person name="Armstrong J."/>
            <person name="Forsburg S.L."/>
            <person name="Cerutti L."/>
            <person name="Lowe T."/>
            <person name="McCombie W.R."/>
            <person name="Paulsen I."/>
            <person name="Potashkin J."/>
            <person name="Shpakovski G.V."/>
            <person name="Ussery D."/>
            <person name="Barrell B.G."/>
            <person name="Nurse P."/>
        </authorList>
    </citation>
    <scope>NUCLEOTIDE SEQUENCE [LARGE SCALE GENOMIC DNA]</scope>
    <source>
        <strain>972 / ATCC 24843</strain>
    </source>
</reference>
<reference key="3">
    <citation type="journal article" date="2006" name="Nat. Biotechnol.">
        <title>ORFeome cloning and global analysis of protein localization in the fission yeast Schizosaccharomyces pombe.</title>
        <authorList>
            <person name="Matsuyama A."/>
            <person name="Arai R."/>
            <person name="Yashiroda Y."/>
            <person name="Shirai A."/>
            <person name="Kamata A."/>
            <person name="Sekido S."/>
            <person name="Kobayashi Y."/>
            <person name="Hashimoto A."/>
            <person name="Hamamoto M."/>
            <person name="Hiraoka Y."/>
            <person name="Horinouchi S."/>
            <person name="Yoshida M."/>
        </authorList>
    </citation>
    <scope>SUBCELLULAR LOCATION [LARGE SCALE ANALYSIS]</scope>
</reference>
<reference key="4">
    <citation type="journal article" date="2008" name="J. Proteome Res.">
        <title>Phosphoproteome analysis of fission yeast.</title>
        <authorList>
            <person name="Wilson-Grady J.T."/>
            <person name="Villen J."/>
            <person name="Gygi S.P."/>
        </authorList>
    </citation>
    <scope>PHOSPHORYLATION [LARGE SCALE ANALYSIS] AT THR-260 AND THR-261</scope>
    <scope>IDENTIFICATION BY MASS SPECTROMETRY</scope>
</reference>
<protein>
    <recommendedName>
        <fullName>Uncharacterized transcriptional regulatory protein C27B12.11c</fullName>
    </recommendedName>
</protein>
<accession>O13658</accession>
<feature type="chain" id="PRO_0000310375" description="Uncharacterized transcriptional regulatory protein C27B12.11c">
    <location>
        <begin position="1"/>
        <end position="738"/>
    </location>
</feature>
<feature type="DNA-binding region" description="Zn(2)-C6 fungal-type" evidence="1">
    <location>
        <begin position="292"/>
        <end position="318"/>
    </location>
</feature>
<feature type="region of interest" description="Disordered" evidence="2">
    <location>
        <begin position="1"/>
        <end position="23"/>
    </location>
</feature>
<feature type="region of interest" description="Disordered" evidence="2">
    <location>
        <begin position="53"/>
        <end position="83"/>
    </location>
</feature>
<feature type="region of interest" description="Disordered" evidence="2">
    <location>
        <begin position="219"/>
        <end position="266"/>
    </location>
</feature>
<feature type="region of interest" description="Disordered" evidence="2">
    <location>
        <begin position="323"/>
        <end position="372"/>
    </location>
</feature>
<feature type="region of interest" description="Disordered" evidence="2">
    <location>
        <begin position="441"/>
        <end position="464"/>
    </location>
</feature>
<feature type="compositionally biased region" description="Polar residues" evidence="2">
    <location>
        <begin position="1"/>
        <end position="10"/>
    </location>
</feature>
<feature type="compositionally biased region" description="Low complexity" evidence="2">
    <location>
        <begin position="55"/>
        <end position="77"/>
    </location>
</feature>
<feature type="compositionally biased region" description="Polar residues" evidence="2">
    <location>
        <begin position="246"/>
        <end position="266"/>
    </location>
</feature>
<feature type="compositionally biased region" description="Basic residues" evidence="2">
    <location>
        <begin position="323"/>
        <end position="335"/>
    </location>
</feature>
<feature type="compositionally biased region" description="Low complexity" evidence="2">
    <location>
        <begin position="340"/>
        <end position="352"/>
    </location>
</feature>
<feature type="compositionally biased region" description="Polar residues" evidence="2">
    <location>
        <begin position="353"/>
        <end position="372"/>
    </location>
</feature>
<feature type="modified residue" description="Phosphothreonine" evidence="4">
    <location>
        <position position="260"/>
    </location>
</feature>
<feature type="modified residue" description="Phosphothreonine" evidence="4">
    <location>
        <position position="261"/>
    </location>
</feature>
<feature type="helix" evidence="5">
    <location>
        <begin position="293"/>
        <end position="298"/>
    </location>
</feature>
<feature type="strand" evidence="5">
    <location>
        <begin position="304"/>
        <end position="307"/>
    </location>
</feature>
<feature type="helix" evidence="5">
    <location>
        <begin position="309"/>
        <end position="314"/>
    </location>
</feature>
<name>YBCB_SCHPO</name>
<evidence type="ECO:0000255" key="1">
    <source>
        <dbReference type="PROSITE-ProRule" id="PRU00227"/>
    </source>
</evidence>
<evidence type="ECO:0000256" key="2">
    <source>
        <dbReference type="SAM" id="MobiDB-lite"/>
    </source>
</evidence>
<evidence type="ECO:0000269" key="3">
    <source>
    </source>
</evidence>
<evidence type="ECO:0000269" key="4">
    <source>
    </source>
</evidence>
<evidence type="ECO:0007829" key="5">
    <source>
        <dbReference type="PDB" id="6O19"/>
    </source>
</evidence>
<proteinExistence type="evidence at protein level"/>
<organism>
    <name type="scientific">Schizosaccharomyces pombe (strain 972 / ATCC 24843)</name>
    <name type="common">Fission yeast</name>
    <dbReference type="NCBI Taxonomy" id="284812"/>
    <lineage>
        <taxon>Eukaryota</taxon>
        <taxon>Fungi</taxon>
        <taxon>Dikarya</taxon>
        <taxon>Ascomycota</taxon>
        <taxon>Taphrinomycotina</taxon>
        <taxon>Schizosaccharomycetes</taxon>
        <taxon>Schizosaccharomycetales</taxon>
        <taxon>Schizosaccharomycetaceae</taxon>
        <taxon>Schizosaccharomyces</taxon>
    </lineage>
</organism>
<keyword id="KW-0002">3D-structure</keyword>
<keyword id="KW-0963">Cytoplasm</keyword>
<keyword id="KW-0238">DNA-binding</keyword>
<keyword id="KW-0479">Metal-binding</keyword>
<keyword id="KW-0539">Nucleus</keyword>
<keyword id="KW-0597">Phosphoprotein</keyword>
<keyword id="KW-1185">Reference proteome</keyword>
<keyword id="KW-0804">Transcription</keyword>
<keyword id="KW-0805">Transcription regulation</keyword>
<keyword id="KW-0862">Zinc</keyword>